<dbReference type="EMBL" id="CP000249">
    <property type="protein sequence ID" value="ABD11968.1"/>
    <property type="molecule type" value="Genomic_DNA"/>
</dbReference>
<dbReference type="RefSeq" id="WP_011437003.1">
    <property type="nucleotide sequence ID" value="NC_007777.1"/>
</dbReference>
<dbReference type="SMR" id="Q2J9S4"/>
<dbReference type="STRING" id="106370.Francci3_2606"/>
<dbReference type="KEGG" id="fra:Francci3_2606"/>
<dbReference type="eggNOG" id="COG0805">
    <property type="taxonomic scope" value="Bacteria"/>
</dbReference>
<dbReference type="HOGENOM" id="CLU_031942_6_0_11"/>
<dbReference type="OrthoDB" id="9777044at2"/>
<dbReference type="PhylomeDB" id="Q2J9S4"/>
<dbReference type="Proteomes" id="UP000001937">
    <property type="component" value="Chromosome"/>
</dbReference>
<dbReference type="GO" id="GO:0033281">
    <property type="term" value="C:TAT protein transport complex"/>
    <property type="evidence" value="ECO:0007669"/>
    <property type="project" value="UniProtKB-UniRule"/>
</dbReference>
<dbReference type="GO" id="GO:0009977">
    <property type="term" value="F:proton motive force dependent protein transmembrane transporter activity"/>
    <property type="evidence" value="ECO:0007669"/>
    <property type="project" value="TreeGrafter"/>
</dbReference>
<dbReference type="GO" id="GO:0065002">
    <property type="term" value="P:intracellular protein transmembrane transport"/>
    <property type="evidence" value="ECO:0007669"/>
    <property type="project" value="TreeGrafter"/>
</dbReference>
<dbReference type="GO" id="GO:0043953">
    <property type="term" value="P:protein transport by the Tat complex"/>
    <property type="evidence" value="ECO:0007669"/>
    <property type="project" value="UniProtKB-UniRule"/>
</dbReference>
<dbReference type="HAMAP" id="MF_00902">
    <property type="entry name" value="TatC"/>
    <property type="match status" value="1"/>
</dbReference>
<dbReference type="InterPro" id="IPR002033">
    <property type="entry name" value="TatC"/>
</dbReference>
<dbReference type="NCBIfam" id="TIGR00945">
    <property type="entry name" value="tatC"/>
    <property type="match status" value="1"/>
</dbReference>
<dbReference type="PANTHER" id="PTHR30371">
    <property type="entry name" value="SEC-INDEPENDENT PROTEIN TRANSLOCASE PROTEIN TATC"/>
    <property type="match status" value="1"/>
</dbReference>
<dbReference type="PANTHER" id="PTHR30371:SF0">
    <property type="entry name" value="SEC-INDEPENDENT PROTEIN TRANSLOCASE PROTEIN TATC, CHLOROPLASTIC-RELATED"/>
    <property type="match status" value="1"/>
</dbReference>
<dbReference type="Pfam" id="PF00902">
    <property type="entry name" value="TatC"/>
    <property type="match status" value="1"/>
</dbReference>
<dbReference type="PRINTS" id="PR01840">
    <property type="entry name" value="TATCFAMILY"/>
</dbReference>
<organism>
    <name type="scientific">Frankia casuarinae (strain DSM 45818 / CECT 9043 / HFP020203 / CcI3)</name>
    <dbReference type="NCBI Taxonomy" id="106370"/>
    <lineage>
        <taxon>Bacteria</taxon>
        <taxon>Bacillati</taxon>
        <taxon>Actinomycetota</taxon>
        <taxon>Actinomycetes</taxon>
        <taxon>Frankiales</taxon>
        <taxon>Frankiaceae</taxon>
        <taxon>Frankia</taxon>
    </lineage>
</organism>
<protein>
    <recommendedName>
        <fullName evidence="1">Sec-independent protein translocase protein TatC</fullName>
    </recommendedName>
</protein>
<comment type="function">
    <text evidence="1">Part of the twin-arginine translocation (Tat) system that transports large folded proteins containing a characteristic twin-arginine motif in their signal peptide across membranes. Together with TatB, TatC is part of a receptor directly interacting with Tat signal peptides.</text>
</comment>
<comment type="subunit">
    <text evidence="1">The Tat system comprises two distinct complexes: a TatABC complex, containing multiple copies of TatA, TatB and TatC subunits, and a separate TatA complex, containing only TatA subunits. Substrates initially bind to the TatABC complex, which probably triggers association of the separate TatA complex to form the active translocon.</text>
</comment>
<comment type="subcellular location">
    <subcellularLocation>
        <location evidence="1">Cell membrane</location>
        <topology evidence="1">Multi-pass membrane protein</topology>
    </subcellularLocation>
</comment>
<comment type="similarity">
    <text evidence="1">Belongs to the TatC family.</text>
</comment>
<reference key="1">
    <citation type="journal article" date="2007" name="Genome Res.">
        <title>Genome characteristics of facultatively symbiotic Frankia sp. strains reflect host range and host plant biogeography.</title>
        <authorList>
            <person name="Normand P."/>
            <person name="Lapierre P."/>
            <person name="Tisa L.S."/>
            <person name="Gogarten J.P."/>
            <person name="Alloisio N."/>
            <person name="Bagnarol E."/>
            <person name="Bassi C.A."/>
            <person name="Berry A.M."/>
            <person name="Bickhart D.M."/>
            <person name="Choisne N."/>
            <person name="Couloux A."/>
            <person name="Cournoyer B."/>
            <person name="Cruveiller S."/>
            <person name="Daubin V."/>
            <person name="Demange N."/>
            <person name="Francino M.P."/>
            <person name="Goltsman E."/>
            <person name="Huang Y."/>
            <person name="Kopp O.R."/>
            <person name="Labarre L."/>
            <person name="Lapidus A."/>
            <person name="Lavire C."/>
            <person name="Marechal J."/>
            <person name="Martinez M."/>
            <person name="Mastronunzio J.E."/>
            <person name="Mullin B.C."/>
            <person name="Niemann J."/>
            <person name="Pujic P."/>
            <person name="Rawnsley T."/>
            <person name="Rouy Z."/>
            <person name="Schenowitz C."/>
            <person name="Sellstedt A."/>
            <person name="Tavares F."/>
            <person name="Tomkins J.P."/>
            <person name="Vallenet D."/>
            <person name="Valverde C."/>
            <person name="Wall L.G."/>
            <person name="Wang Y."/>
            <person name="Medigue C."/>
            <person name="Benson D.R."/>
        </authorList>
    </citation>
    <scope>NUCLEOTIDE SEQUENCE [LARGE SCALE GENOMIC DNA]</scope>
    <source>
        <strain>DSM 45818 / CECT 9043 / HFP020203 / CcI3</strain>
    </source>
</reference>
<accession>Q2J9S4</accession>
<proteinExistence type="inferred from homology"/>
<feature type="chain" id="PRO_0000412865" description="Sec-independent protein translocase protein TatC">
    <location>
        <begin position="1"/>
        <end position="364"/>
    </location>
</feature>
<feature type="transmembrane region" description="Helical" evidence="1">
    <location>
        <begin position="42"/>
        <end position="62"/>
    </location>
</feature>
<feature type="transmembrane region" description="Helical" evidence="1">
    <location>
        <begin position="107"/>
        <end position="127"/>
    </location>
</feature>
<feature type="transmembrane region" description="Helical" evidence="1">
    <location>
        <begin position="139"/>
        <end position="159"/>
    </location>
</feature>
<feature type="transmembrane region" description="Helical" evidence="1">
    <location>
        <begin position="160"/>
        <end position="180"/>
    </location>
</feature>
<feature type="transmembrane region" description="Helical" evidence="1">
    <location>
        <begin position="194"/>
        <end position="214"/>
    </location>
</feature>
<feature type="transmembrane region" description="Helical" evidence="1">
    <location>
        <begin position="225"/>
        <end position="245"/>
    </location>
</feature>
<feature type="transmembrane region" description="Helical" evidence="1">
    <location>
        <begin position="246"/>
        <end position="266"/>
    </location>
</feature>
<feature type="region of interest" description="Disordered" evidence="2">
    <location>
        <begin position="277"/>
        <end position="364"/>
    </location>
</feature>
<feature type="compositionally biased region" description="Acidic residues" evidence="2">
    <location>
        <begin position="282"/>
        <end position="295"/>
    </location>
</feature>
<feature type="compositionally biased region" description="Low complexity" evidence="2">
    <location>
        <begin position="301"/>
        <end position="320"/>
    </location>
</feature>
<feature type="compositionally biased region" description="Polar residues" evidence="2">
    <location>
        <begin position="324"/>
        <end position="344"/>
    </location>
</feature>
<sequence length="364" mass="39153">MPGLPTPRRLVASVNYRRTRTVEDSRMPLTEHLRELRNRVAIALLAFAIAGVVCFIFEPRIFDWLKAPYCDLPASKRFSPDGLAANDCTLYFFGILDAFTIRLKISMIAAVVVSSPVWLYQLWSFITPGLHRHERRWSLTFVGVSLVLFATGAVFAYLTLSTGLGLLLGFGGNGLVSVLDGNRYLSYVQAMLLIFGLSFEVPLLVMMLNLAGIVSTAKLRSWRRPEIFLVFVFAAVVTPSQDPFTMLALGLPMVLLYEVALIIGWLNDRRVARRGDTSPYADLDDDETSPLDFDDAPPRPAASAGPAATATSPGTANPPGTANPPGTANPVGTANPVGTGSSTPVGAGTAPVSPSTDVTHGDIT</sequence>
<evidence type="ECO:0000255" key="1">
    <source>
        <dbReference type="HAMAP-Rule" id="MF_00902"/>
    </source>
</evidence>
<evidence type="ECO:0000256" key="2">
    <source>
        <dbReference type="SAM" id="MobiDB-lite"/>
    </source>
</evidence>
<keyword id="KW-1003">Cell membrane</keyword>
<keyword id="KW-0472">Membrane</keyword>
<keyword id="KW-0653">Protein transport</keyword>
<keyword id="KW-1185">Reference proteome</keyword>
<keyword id="KW-0811">Translocation</keyword>
<keyword id="KW-0812">Transmembrane</keyword>
<keyword id="KW-1133">Transmembrane helix</keyword>
<keyword id="KW-0813">Transport</keyword>
<name>TATC_FRACC</name>
<gene>
    <name evidence="1" type="primary">tatC</name>
    <name type="ordered locus">Francci3_2606</name>
</gene>